<gene>
    <name type="ordered locus">NGR_a00200</name>
    <name type="ORF">y4bJ</name>
</gene>
<protein>
    <recommendedName>
        <fullName>Uncharacterized protein y4bJ</fullName>
    </recommendedName>
</protein>
<accession>P55377</accession>
<geneLocation type="plasmid">
    <name>sym pNGR234a</name>
</geneLocation>
<proteinExistence type="inferred from homology"/>
<name>Y4BJ_SINFN</name>
<feature type="chain" id="PRO_0000093869" description="Uncharacterized protein y4bJ">
    <location>
        <begin position="1"/>
        <end position="630"/>
    </location>
</feature>
<feature type="transmembrane region" description="Helical" evidence="1">
    <location>
        <begin position="8"/>
        <end position="28"/>
    </location>
</feature>
<feature type="transmembrane region" description="Helical" evidence="1">
    <location>
        <begin position="258"/>
        <end position="278"/>
    </location>
</feature>
<feature type="region of interest" description="Disordered" evidence="2">
    <location>
        <begin position="399"/>
        <end position="426"/>
    </location>
</feature>
<feature type="compositionally biased region" description="Polar residues" evidence="2">
    <location>
        <begin position="404"/>
        <end position="417"/>
    </location>
</feature>
<sequence length="630" mass="67855">MLSSRLGLFNMFRLLAAILVFTGLASAVNADLLQTGGSRWVVLASTRDLDNAIGIANLYQHRFDDVRVAEASNGWLAVIAGPVSIARGAKAAREELWSAGGFPPDLFLSNGQSLRRTVWEPPKGRPIPTWSYKGGQPLVFSAGGLEIEVSHLAEGNTRYPSITLRRAGRLLIKEVLKGSESFGDNMNAEVRLVWLDRAVAEPQIIFSSHWNGAHCCTVSKILTKVGNGWTSIEGATLDGGGYRLQDIDGDGSVELLSVDNSFLYTFAPYVFSSAPLVISKLDGDRLIDMRWNSAFRRYYRRELFGWEYRAKLEPEIWRKNGFLSAWLALKSVLGESDQAWTVVLENYDRSSEWPLTVCDAPLKEGVCPEEATREVSFPEALRDHLARNGYLGPQVAKIEETSKPTEQPSPADSTSTPAAPEKGAASSAGTGFFISKQGHLVTNHHVIKGCSAIEVRRPGQLRLPANIVAVDPTNDLALLRVESDTGAYASVRVETRLGESVAVFGYPLSHVLASGGNFTLGNVTALAGLGNDTRFIQISAPVQPGNSGGPLIDSYGNVIGVVTSKLDALAALAVTGDIPQNVNFALRGASLYAFLLSYGISPVAGSNTQKLDAPELAERASSFSVAVTCE</sequence>
<reference key="1">
    <citation type="journal article" date="1997" name="Nature">
        <title>Molecular basis of symbiosis between Rhizobium and legumes.</title>
        <authorList>
            <person name="Freiberg C.A."/>
            <person name="Fellay R."/>
            <person name="Bairoch A."/>
            <person name="Broughton W.J."/>
            <person name="Rosenthal A."/>
            <person name="Perret X."/>
        </authorList>
    </citation>
    <scope>NUCLEOTIDE SEQUENCE [LARGE SCALE GENOMIC DNA]</scope>
    <source>
        <strain>NBRC 101917 / NGR234</strain>
    </source>
</reference>
<reference key="2">
    <citation type="journal article" date="2009" name="Appl. Environ. Microbiol.">
        <title>Rhizobium sp. strain NGR234 possesses a remarkable number of secretion systems.</title>
        <authorList>
            <person name="Schmeisser C."/>
            <person name="Liesegang H."/>
            <person name="Krysciak D."/>
            <person name="Bakkou N."/>
            <person name="Le Quere A."/>
            <person name="Wollherr A."/>
            <person name="Heinemeyer I."/>
            <person name="Morgenstern B."/>
            <person name="Pommerening-Roeser A."/>
            <person name="Flores M."/>
            <person name="Palacios R."/>
            <person name="Brenner S."/>
            <person name="Gottschalk G."/>
            <person name="Schmitz R.A."/>
            <person name="Broughton W.J."/>
            <person name="Perret X."/>
            <person name="Strittmatter A.W."/>
            <person name="Streit W.R."/>
        </authorList>
    </citation>
    <scope>NUCLEOTIDE SEQUENCE [LARGE SCALE GENOMIC DNA]</scope>
    <source>
        <strain>NBRC 101917 / NGR234</strain>
    </source>
</reference>
<evidence type="ECO:0000255" key="1"/>
<evidence type="ECO:0000256" key="2">
    <source>
        <dbReference type="SAM" id="MobiDB-lite"/>
    </source>
</evidence>
<evidence type="ECO:0000305" key="3"/>
<comment type="subcellular location">
    <subcellularLocation>
        <location evidence="3">Cell membrane</location>
        <topology evidence="3">Multi-pass membrane protein</topology>
    </subcellularLocation>
</comment>
<comment type="similarity">
    <text evidence="3">Belongs to the peptidase S1C family.</text>
</comment>
<dbReference type="EMBL" id="U00090">
    <property type="protein sequence ID" value="AAB91625.1"/>
    <property type="molecule type" value="Genomic_DNA"/>
</dbReference>
<dbReference type="RefSeq" id="NP_443787.1">
    <property type="nucleotide sequence ID" value="NC_000914.2"/>
</dbReference>
<dbReference type="SMR" id="P55377"/>
<dbReference type="KEGG" id="rhi:NGR_a00200"/>
<dbReference type="PATRIC" id="fig|394.7.peg.17"/>
<dbReference type="eggNOG" id="COG0265">
    <property type="taxonomic scope" value="Bacteria"/>
</dbReference>
<dbReference type="HOGENOM" id="CLU_434041_0_0_5"/>
<dbReference type="OrthoDB" id="1522627at2"/>
<dbReference type="Proteomes" id="UP000001054">
    <property type="component" value="Plasmid pNGR234a"/>
</dbReference>
<dbReference type="GO" id="GO:0005886">
    <property type="term" value="C:plasma membrane"/>
    <property type="evidence" value="ECO:0007669"/>
    <property type="project" value="UniProtKB-SubCell"/>
</dbReference>
<dbReference type="GO" id="GO:0004252">
    <property type="term" value="F:serine-type endopeptidase activity"/>
    <property type="evidence" value="ECO:0007669"/>
    <property type="project" value="InterPro"/>
</dbReference>
<dbReference type="GO" id="GO:0006508">
    <property type="term" value="P:proteolysis"/>
    <property type="evidence" value="ECO:0007669"/>
    <property type="project" value="InterPro"/>
</dbReference>
<dbReference type="Gene3D" id="2.40.10.10">
    <property type="entry name" value="Trypsin-like serine proteases"/>
    <property type="match status" value="2"/>
</dbReference>
<dbReference type="InterPro" id="IPR009003">
    <property type="entry name" value="Peptidase_S1_PA"/>
</dbReference>
<dbReference type="InterPro" id="IPR043504">
    <property type="entry name" value="Peptidase_S1_PA_chymotrypsin"/>
</dbReference>
<dbReference type="InterPro" id="IPR001940">
    <property type="entry name" value="Peptidase_S1C"/>
</dbReference>
<dbReference type="PANTHER" id="PTHR43019:SF23">
    <property type="entry name" value="PROTEASE DO-LIKE 5, CHLOROPLASTIC"/>
    <property type="match status" value="1"/>
</dbReference>
<dbReference type="PANTHER" id="PTHR43019">
    <property type="entry name" value="SERINE ENDOPROTEASE DEGS"/>
    <property type="match status" value="1"/>
</dbReference>
<dbReference type="Pfam" id="PF13365">
    <property type="entry name" value="Trypsin_2"/>
    <property type="match status" value="1"/>
</dbReference>
<dbReference type="PRINTS" id="PR00834">
    <property type="entry name" value="PROTEASES2C"/>
</dbReference>
<dbReference type="SUPFAM" id="SSF50494">
    <property type="entry name" value="Trypsin-like serine proteases"/>
    <property type="match status" value="1"/>
</dbReference>
<organism>
    <name type="scientific">Sinorhizobium fredii (strain NBRC 101917 / NGR234)</name>
    <dbReference type="NCBI Taxonomy" id="394"/>
    <lineage>
        <taxon>Bacteria</taxon>
        <taxon>Pseudomonadati</taxon>
        <taxon>Pseudomonadota</taxon>
        <taxon>Alphaproteobacteria</taxon>
        <taxon>Hyphomicrobiales</taxon>
        <taxon>Rhizobiaceae</taxon>
        <taxon>Sinorhizobium/Ensifer group</taxon>
        <taxon>Sinorhizobium</taxon>
    </lineage>
</organism>
<keyword id="KW-1003">Cell membrane</keyword>
<keyword id="KW-0472">Membrane</keyword>
<keyword id="KW-0614">Plasmid</keyword>
<keyword id="KW-1185">Reference proteome</keyword>
<keyword id="KW-0812">Transmembrane</keyword>
<keyword id="KW-1133">Transmembrane helix</keyword>